<organism>
    <name type="scientific">Mus musculus</name>
    <name type="common">Mouse</name>
    <dbReference type="NCBI Taxonomy" id="10090"/>
    <lineage>
        <taxon>Eukaryota</taxon>
        <taxon>Metazoa</taxon>
        <taxon>Chordata</taxon>
        <taxon>Craniata</taxon>
        <taxon>Vertebrata</taxon>
        <taxon>Euteleostomi</taxon>
        <taxon>Mammalia</taxon>
        <taxon>Eutheria</taxon>
        <taxon>Euarchontoglires</taxon>
        <taxon>Glires</taxon>
        <taxon>Rodentia</taxon>
        <taxon>Myomorpha</taxon>
        <taxon>Muroidea</taxon>
        <taxon>Muridae</taxon>
        <taxon>Murinae</taxon>
        <taxon>Mus</taxon>
        <taxon>Mus</taxon>
    </lineage>
</organism>
<accession>Q9QUT0</accession>
<accession>Q3UP27</accession>
<accession>Q794G1</accession>
<feature type="chain" id="PRO_0000380190" description="Ammonium transporter Rh type A">
    <location>
        <begin position="1"/>
        <end position="438"/>
    </location>
</feature>
<feature type="topological domain" description="Cytoplasmic" evidence="2">
    <location>
        <begin position="1"/>
        <end position="4"/>
    </location>
</feature>
<feature type="transmembrane region" description="Helical" evidence="2">
    <location>
        <begin position="5"/>
        <end position="25"/>
    </location>
</feature>
<feature type="topological domain" description="Extracellular" evidence="2">
    <location>
        <begin position="26"/>
        <end position="61"/>
    </location>
</feature>
<feature type="transmembrane region" description="Helical" evidence="2">
    <location>
        <begin position="62"/>
        <end position="82"/>
    </location>
</feature>
<feature type="topological domain" description="Cytoplasmic" evidence="2">
    <location>
        <begin position="83"/>
        <end position="86"/>
    </location>
</feature>
<feature type="transmembrane region" description="Helical" evidence="2">
    <location>
        <begin position="87"/>
        <end position="107"/>
    </location>
</feature>
<feature type="topological domain" description="Extracellular" evidence="2">
    <location>
        <begin position="108"/>
        <end position="121"/>
    </location>
</feature>
<feature type="transmembrane region" description="Helical" evidence="2">
    <location>
        <begin position="122"/>
        <end position="142"/>
    </location>
</feature>
<feature type="topological domain" description="Cytoplasmic" evidence="2">
    <location>
        <begin position="143"/>
        <end position="148"/>
    </location>
</feature>
<feature type="transmembrane region" description="Helical" evidence="2">
    <location>
        <begin position="149"/>
        <end position="169"/>
    </location>
</feature>
<feature type="topological domain" description="Extracellular" evidence="2">
    <location>
        <begin position="170"/>
        <end position="178"/>
    </location>
</feature>
<feature type="transmembrane region" description="Helical" evidence="2">
    <location>
        <begin position="179"/>
        <end position="199"/>
    </location>
</feature>
<feature type="topological domain" description="Cytoplasmic" evidence="2">
    <location>
        <begin position="200"/>
        <end position="218"/>
    </location>
</feature>
<feature type="transmembrane region" description="Helical" evidence="2">
    <location>
        <begin position="219"/>
        <end position="239"/>
    </location>
</feature>
<feature type="topological domain" description="Extracellular" evidence="2">
    <location>
        <begin position="240"/>
        <end position="249"/>
    </location>
</feature>
<feature type="transmembrane region" description="Helical" evidence="2">
    <location>
        <begin position="250"/>
        <end position="270"/>
    </location>
</feature>
<feature type="topological domain" description="Cytoplasmic" evidence="2">
    <location>
        <begin position="271"/>
        <end position="278"/>
    </location>
</feature>
<feature type="transmembrane region" description="Helical" evidence="2">
    <location>
        <begin position="279"/>
        <end position="296"/>
    </location>
</feature>
<feature type="topological domain" description="Extracellular" evidence="2">
    <location>
        <begin position="297"/>
        <end position="300"/>
    </location>
</feature>
<feature type="transmembrane region" description="Helical" evidence="2">
    <location>
        <begin position="301"/>
        <end position="321"/>
    </location>
</feature>
<feature type="topological domain" description="Cytoplasmic" evidence="2">
    <location>
        <begin position="322"/>
        <end position="342"/>
    </location>
</feature>
<feature type="transmembrane region" description="Helical" evidence="2">
    <location>
        <begin position="343"/>
        <end position="363"/>
    </location>
</feature>
<feature type="topological domain" description="Extracellular" evidence="2">
    <location>
        <begin position="364"/>
        <end position="372"/>
    </location>
</feature>
<feature type="transmembrane region" description="Helical" evidence="2">
    <location>
        <begin position="373"/>
        <end position="393"/>
    </location>
</feature>
<feature type="topological domain" description="Cytoplasmic" evidence="2">
    <location>
        <begin position="394"/>
        <end position="438"/>
    </location>
</feature>
<feature type="glycosylation site" description="N-linked (GlcNAc...) asparagine" evidence="2">
    <location>
        <position position="31"/>
    </location>
</feature>
<feature type="glycosylation site" description="N-linked (GlcNAc...) asparagine" evidence="2">
    <location>
        <position position="36"/>
    </location>
</feature>
<feature type="glycosylation site" description="N-linked (GlcNAc...) asparagine" evidence="2">
    <location>
        <position position="41"/>
    </location>
</feature>
<feature type="glycosylation site" description="N-linked (GlcNAc...) asparagine" evidence="2">
    <location>
        <position position="47"/>
    </location>
</feature>
<feature type="sequence conflict" description="In Ref. 4; BAE25570." evidence="5" ref="4">
    <original>A</original>
    <variation>P</variation>
    <location>
        <position position="180"/>
    </location>
</feature>
<gene>
    <name evidence="6" type="primary">Rhag</name>
    <name type="synonym">Rh50</name>
</gene>
<keyword id="KW-0924">Ammonia transport</keyword>
<keyword id="KW-0325">Glycoprotein</keyword>
<keyword id="KW-0472">Membrane</keyword>
<keyword id="KW-1185">Reference proteome</keyword>
<keyword id="KW-0812">Transmembrane</keyword>
<keyword id="KW-1133">Transmembrane helix</keyword>
<keyword id="KW-0813">Transport</keyword>
<dbReference type="EMBL" id="AB015192">
    <property type="protein sequence ID" value="BAA32441.1"/>
    <property type="molecule type" value="mRNA"/>
</dbReference>
<dbReference type="EMBL" id="AF065395">
    <property type="protein sequence ID" value="AAD13387.1"/>
    <property type="molecule type" value="mRNA"/>
</dbReference>
<dbReference type="EMBL" id="AF057526">
    <property type="protein sequence ID" value="AAC25155.1"/>
    <property type="molecule type" value="mRNA"/>
</dbReference>
<dbReference type="EMBL" id="AK143851">
    <property type="protein sequence ID" value="BAE25570.1"/>
    <property type="molecule type" value="mRNA"/>
</dbReference>
<dbReference type="EMBL" id="AK157847">
    <property type="protein sequence ID" value="BAE34227.1"/>
    <property type="molecule type" value="mRNA"/>
</dbReference>
<dbReference type="EMBL" id="CH466559">
    <property type="protein sequence ID" value="EDL23386.1"/>
    <property type="molecule type" value="Genomic_DNA"/>
</dbReference>
<dbReference type="EMBL" id="BC101941">
    <property type="protein sequence ID" value="AAI01942.1"/>
    <property type="molecule type" value="mRNA"/>
</dbReference>
<dbReference type="EMBL" id="BC101942">
    <property type="protein sequence ID" value="AAI01943.1"/>
    <property type="molecule type" value="mRNA"/>
</dbReference>
<dbReference type="EMBL" id="BC103512">
    <property type="protein sequence ID" value="AAI03513.1"/>
    <property type="molecule type" value="mRNA"/>
</dbReference>
<dbReference type="EMBL" id="BC103662">
    <property type="protein sequence ID" value="AAI03663.1"/>
    <property type="molecule type" value="mRNA"/>
</dbReference>
<dbReference type="CCDS" id="CCDS28787.1"/>
<dbReference type="RefSeq" id="NP_035399.1">
    <property type="nucleotide sequence ID" value="NM_011269.2"/>
</dbReference>
<dbReference type="SMR" id="Q9QUT0"/>
<dbReference type="FunCoup" id="Q9QUT0">
    <property type="interactions" value="161"/>
</dbReference>
<dbReference type="STRING" id="10090.ENSMUSP00000024721"/>
<dbReference type="GlyCosmos" id="Q9QUT0">
    <property type="glycosylation" value="4 sites, No reported glycans"/>
</dbReference>
<dbReference type="GlyGen" id="Q9QUT0">
    <property type="glycosylation" value="4 sites"/>
</dbReference>
<dbReference type="PhosphoSitePlus" id="Q9QUT0"/>
<dbReference type="jPOST" id="Q9QUT0"/>
<dbReference type="PaxDb" id="10090-ENSMUSP00000024721"/>
<dbReference type="ProteomicsDB" id="255324"/>
<dbReference type="Antibodypedia" id="17000">
    <property type="antibodies" value="67 antibodies from 24 providers"/>
</dbReference>
<dbReference type="DNASU" id="19743"/>
<dbReference type="Ensembl" id="ENSMUST00000024721.8">
    <property type="protein sequence ID" value="ENSMUSP00000024721.8"/>
    <property type="gene ID" value="ENSMUSG00000023926.9"/>
</dbReference>
<dbReference type="GeneID" id="19743"/>
<dbReference type="KEGG" id="mmu:19743"/>
<dbReference type="UCSC" id="uc008col.1">
    <property type="organism name" value="mouse"/>
</dbReference>
<dbReference type="AGR" id="MGI:1202713"/>
<dbReference type="CTD" id="6005"/>
<dbReference type="MGI" id="MGI:1202713">
    <property type="gene designation" value="Rhag"/>
</dbReference>
<dbReference type="VEuPathDB" id="HostDB:ENSMUSG00000023926"/>
<dbReference type="eggNOG" id="KOG3796">
    <property type="taxonomic scope" value="Eukaryota"/>
</dbReference>
<dbReference type="GeneTree" id="ENSGT00950000182844"/>
<dbReference type="HOGENOM" id="CLU_021386_1_0_1"/>
<dbReference type="InParanoid" id="Q9QUT0"/>
<dbReference type="OMA" id="TNMRIRF"/>
<dbReference type="OrthoDB" id="534912at2759"/>
<dbReference type="PhylomeDB" id="Q9QUT0"/>
<dbReference type="TreeFam" id="TF314450"/>
<dbReference type="Reactome" id="R-MMU-1237044">
    <property type="pathway name" value="Erythrocytes take up carbon dioxide and release oxygen"/>
</dbReference>
<dbReference type="Reactome" id="R-MMU-1247673">
    <property type="pathway name" value="Erythrocytes take up oxygen and release carbon dioxide"/>
</dbReference>
<dbReference type="Reactome" id="R-MMU-444411">
    <property type="pathway name" value="Rhesus glycoproteins mediate ammonium transport"/>
</dbReference>
<dbReference type="BioGRID-ORCS" id="19743">
    <property type="hits" value="2 hits in 77 CRISPR screens"/>
</dbReference>
<dbReference type="PRO" id="PR:Q9QUT0"/>
<dbReference type="Proteomes" id="UP000000589">
    <property type="component" value="Chromosome 17"/>
</dbReference>
<dbReference type="RNAct" id="Q9QUT0">
    <property type="molecule type" value="protein"/>
</dbReference>
<dbReference type="Bgee" id="ENSMUSG00000023926">
    <property type="expression patterns" value="Expressed in fetal liver hematopoietic progenitor cell and 71 other cell types or tissues"/>
</dbReference>
<dbReference type="ExpressionAtlas" id="Q9QUT0">
    <property type="expression patterns" value="baseline and differential"/>
</dbReference>
<dbReference type="GO" id="GO:0170014">
    <property type="term" value="C:ankyrin-1 complex"/>
    <property type="evidence" value="ECO:0007669"/>
    <property type="project" value="Ensembl"/>
</dbReference>
<dbReference type="GO" id="GO:0016020">
    <property type="term" value="C:membrane"/>
    <property type="evidence" value="ECO:0000250"/>
    <property type="project" value="UniProtKB"/>
</dbReference>
<dbReference type="GO" id="GO:0005886">
    <property type="term" value="C:plasma membrane"/>
    <property type="evidence" value="ECO:0000250"/>
    <property type="project" value="UniProtKB"/>
</dbReference>
<dbReference type="GO" id="GO:0008519">
    <property type="term" value="F:ammonium channel activity"/>
    <property type="evidence" value="ECO:0000315"/>
    <property type="project" value="UniProtKB"/>
</dbReference>
<dbReference type="GO" id="GO:0030506">
    <property type="term" value="F:ankyrin binding"/>
    <property type="evidence" value="ECO:0007669"/>
    <property type="project" value="Ensembl"/>
</dbReference>
<dbReference type="GO" id="GO:0035379">
    <property type="term" value="F:carbon dioxide transmembrane transporter activity"/>
    <property type="evidence" value="ECO:0000250"/>
    <property type="project" value="UniProtKB"/>
</dbReference>
<dbReference type="GO" id="GO:0022840">
    <property type="term" value="F:leak channel activity"/>
    <property type="evidence" value="ECO:0000250"/>
    <property type="project" value="UniProtKB"/>
</dbReference>
<dbReference type="GO" id="GO:0015200">
    <property type="term" value="F:methylammonium transmembrane transporter activity"/>
    <property type="evidence" value="ECO:0000314"/>
    <property type="project" value="UniProtKB"/>
</dbReference>
<dbReference type="GO" id="GO:0072488">
    <property type="term" value="P:ammonium transmembrane transport"/>
    <property type="evidence" value="ECO:0000315"/>
    <property type="project" value="MGI"/>
</dbReference>
<dbReference type="GO" id="GO:0035378">
    <property type="term" value="P:carbon dioxide transmembrane transport"/>
    <property type="evidence" value="ECO:0000250"/>
    <property type="project" value="UniProtKB"/>
</dbReference>
<dbReference type="GO" id="GO:0015670">
    <property type="term" value="P:carbon dioxide transport"/>
    <property type="evidence" value="ECO:0000250"/>
    <property type="project" value="UniProtKB"/>
</dbReference>
<dbReference type="GO" id="GO:0048821">
    <property type="term" value="P:erythrocyte development"/>
    <property type="evidence" value="ECO:0000315"/>
    <property type="project" value="MGI"/>
</dbReference>
<dbReference type="GO" id="GO:0098662">
    <property type="term" value="P:inorganic cation transmembrane transport"/>
    <property type="evidence" value="ECO:0000250"/>
    <property type="project" value="UniProtKB"/>
</dbReference>
<dbReference type="GO" id="GO:0006873">
    <property type="term" value="P:intracellular monoatomic ion homeostasis"/>
    <property type="evidence" value="ECO:0000250"/>
    <property type="project" value="UniProtKB"/>
</dbReference>
<dbReference type="GO" id="GO:0072489">
    <property type="term" value="P:methylammonium transmembrane transport"/>
    <property type="evidence" value="ECO:0000314"/>
    <property type="project" value="UniProtKB"/>
</dbReference>
<dbReference type="GO" id="GO:0060586">
    <property type="term" value="P:multicellular organismal-level iron ion homeostasis"/>
    <property type="evidence" value="ECO:0000315"/>
    <property type="project" value="MGI"/>
</dbReference>
<dbReference type="FunFam" id="1.10.3430.10:FF:000001">
    <property type="entry name" value="Ammonium transporter Rh type C"/>
    <property type="match status" value="1"/>
</dbReference>
<dbReference type="Gene3D" id="1.10.3430.10">
    <property type="entry name" value="Ammonium transporter AmtB like domains"/>
    <property type="match status" value="1"/>
</dbReference>
<dbReference type="InterPro" id="IPR029020">
    <property type="entry name" value="Ammonium/urea_transptr"/>
</dbReference>
<dbReference type="InterPro" id="IPR024041">
    <property type="entry name" value="NH4_transpt_AmtB-like_dom"/>
</dbReference>
<dbReference type="InterPro" id="IPR002229">
    <property type="entry name" value="RhesusRHD"/>
</dbReference>
<dbReference type="PANTHER" id="PTHR11730">
    <property type="entry name" value="AMMONIUM TRANSPORTER"/>
    <property type="match status" value="1"/>
</dbReference>
<dbReference type="PANTHER" id="PTHR11730:SF32">
    <property type="entry name" value="AMMONIUM TRANSPORTER RH TYPE A"/>
    <property type="match status" value="1"/>
</dbReference>
<dbReference type="Pfam" id="PF00909">
    <property type="entry name" value="Ammonium_transp"/>
    <property type="match status" value="1"/>
</dbReference>
<dbReference type="PRINTS" id="PR00342">
    <property type="entry name" value="RHESUSRHD"/>
</dbReference>
<dbReference type="SUPFAM" id="SSF111352">
    <property type="entry name" value="Ammonium transporter"/>
    <property type="match status" value="1"/>
</dbReference>
<sequence>MRFKFPLMAISLEVAMIVLFGLFVEYETPQNASQKNASHQNASQQGNTSSSAKKDQFFQLYPLFQDVHVMIFVGFGFLMTFLKKYGFSGVGFNLFLAALGLQWGTIMQGLLHSHGKEFHFGIYNMINADFSTATVLISFGAVLGKTSPIQMLIMTILEIAVFAGNEYLVTELFEASDTGASMTIHAFGAYFGLAVAGVLYRPGLRCEHPNDESVYHSDLFAMIGTLFLWIFWPSFNSAIADPGDHQYRAIVNTYMSLAACVITAYALSSLVERRGRLDMVHIQNATLAGGVAVGTCADMEIPLYAAMTIGSIAGIISVLGYKFFSPLLANKLMIHDTCGVHNLHGLPGVFGGLASIVAISWGMSTASMAMQAAALGSSIGSAIVGGLLTGLILKLPIWNQPPDEYCYDDSVSWKVPKFRELDNRFFQHANHNHVEHEV</sequence>
<protein>
    <recommendedName>
        <fullName evidence="5">Ammonium transporter Rh type A</fullName>
    </recommendedName>
    <alternativeName>
        <fullName>Erythrocyte membrane glycoprotein Rh50</fullName>
    </alternativeName>
    <alternativeName>
        <fullName>Rhesus blood group family type A glycoprotein</fullName>
        <shortName>Rh family type A glycoprotein</shortName>
        <shortName>Rh type A glycoprotein</shortName>
    </alternativeName>
    <cdAntigenName>CD241</cdAntigenName>
</protein>
<reference key="1">
    <citation type="journal article" date="1998" name="Biochem. Biophys. Res. Commun.">
        <title>Conserved evolution of the Rh50 gene compared to its homologous Rh blood group gene.</title>
        <authorList>
            <person name="Kitano T."/>
            <person name="Sumiyama K."/>
            <person name="Shiroishi T."/>
            <person name="Saitou N."/>
        </authorList>
    </citation>
    <scope>NUCLEOTIDE SEQUENCE [MRNA]</scope>
    <source>
        <strain>C57BL/10</strain>
        <tissue>Bone marrow</tissue>
    </source>
</reference>
<reference key="2">
    <citation type="journal article" date="1999" name="J. Mol. Evol.">
        <title>The members of the RH gene family (RH50 and RH30) followed different evolutionary pathways.</title>
        <authorList>
            <person name="Matassi G."/>
            <person name="Cherif-Zahar B."/>
            <person name="Pesole G."/>
            <person name="Raynal V."/>
            <person name="Cartron J.-P."/>
        </authorList>
    </citation>
    <scope>NUCLEOTIDE SEQUENCE [MRNA]</scope>
</reference>
<reference key="3">
    <citation type="journal article" date="1999" name="Biochem. Genet.">
        <title>The mouse Rhl1 and Rhag genes: sequence, organization, expression, and chromosomal mapping.</title>
        <authorList>
            <person name="Liu Z."/>
            <person name="Huang C.-H."/>
        </authorList>
    </citation>
    <scope>NUCLEOTIDE SEQUENCE [MRNA]</scope>
</reference>
<reference key="4">
    <citation type="journal article" date="2005" name="Science">
        <title>The transcriptional landscape of the mammalian genome.</title>
        <authorList>
            <person name="Carninci P."/>
            <person name="Kasukawa T."/>
            <person name="Katayama S."/>
            <person name="Gough J."/>
            <person name="Frith M.C."/>
            <person name="Maeda N."/>
            <person name="Oyama R."/>
            <person name="Ravasi T."/>
            <person name="Lenhard B."/>
            <person name="Wells C."/>
            <person name="Kodzius R."/>
            <person name="Shimokawa K."/>
            <person name="Bajic V.B."/>
            <person name="Brenner S.E."/>
            <person name="Batalov S."/>
            <person name="Forrest A.R."/>
            <person name="Zavolan M."/>
            <person name="Davis M.J."/>
            <person name="Wilming L.G."/>
            <person name="Aidinis V."/>
            <person name="Allen J.E."/>
            <person name="Ambesi-Impiombato A."/>
            <person name="Apweiler R."/>
            <person name="Aturaliya R.N."/>
            <person name="Bailey T.L."/>
            <person name="Bansal M."/>
            <person name="Baxter L."/>
            <person name="Beisel K.W."/>
            <person name="Bersano T."/>
            <person name="Bono H."/>
            <person name="Chalk A.M."/>
            <person name="Chiu K.P."/>
            <person name="Choudhary V."/>
            <person name="Christoffels A."/>
            <person name="Clutterbuck D.R."/>
            <person name="Crowe M.L."/>
            <person name="Dalla E."/>
            <person name="Dalrymple B.P."/>
            <person name="de Bono B."/>
            <person name="Della Gatta G."/>
            <person name="di Bernardo D."/>
            <person name="Down T."/>
            <person name="Engstrom P."/>
            <person name="Fagiolini M."/>
            <person name="Faulkner G."/>
            <person name="Fletcher C.F."/>
            <person name="Fukushima T."/>
            <person name="Furuno M."/>
            <person name="Futaki S."/>
            <person name="Gariboldi M."/>
            <person name="Georgii-Hemming P."/>
            <person name="Gingeras T.R."/>
            <person name="Gojobori T."/>
            <person name="Green R.E."/>
            <person name="Gustincich S."/>
            <person name="Harbers M."/>
            <person name="Hayashi Y."/>
            <person name="Hensch T.K."/>
            <person name="Hirokawa N."/>
            <person name="Hill D."/>
            <person name="Huminiecki L."/>
            <person name="Iacono M."/>
            <person name="Ikeo K."/>
            <person name="Iwama A."/>
            <person name="Ishikawa T."/>
            <person name="Jakt M."/>
            <person name="Kanapin A."/>
            <person name="Katoh M."/>
            <person name="Kawasawa Y."/>
            <person name="Kelso J."/>
            <person name="Kitamura H."/>
            <person name="Kitano H."/>
            <person name="Kollias G."/>
            <person name="Krishnan S.P."/>
            <person name="Kruger A."/>
            <person name="Kummerfeld S.K."/>
            <person name="Kurochkin I.V."/>
            <person name="Lareau L.F."/>
            <person name="Lazarevic D."/>
            <person name="Lipovich L."/>
            <person name="Liu J."/>
            <person name="Liuni S."/>
            <person name="McWilliam S."/>
            <person name="Madan Babu M."/>
            <person name="Madera M."/>
            <person name="Marchionni L."/>
            <person name="Matsuda H."/>
            <person name="Matsuzawa S."/>
            <person name="Miki H."/>
            <person name="Mignone F."/>
            <person name="Miyake S."/>
            <person name="Morris K."/>
            <person name="Mottagui-Tabar S."/>
            <person name="Mulder N."/>
            <person name="Nakano N."/>
            <person name="Nakauchi H."/>
            <person name="Ng P."/>
            <person name="Nilsson R."/>
            <person name="Nishiguchi S."/>
            <person name="Nishikawa S."/>
            <person name="Nori F."/>
            <person name="Ohara O."/>
            <person name="Okazaki Y."/>
            <person name="Orlando V."/>
            <person name="Pang K.C."/>
            <person name="Pavan W.J."/>
            <person name="Pavesi G."/>
            <person name="Pesole G."/>
            <person name="Petrovsky N."/>
            <person name="Piazza S."/>
            <person name="Reed J."/>
            <person name="Reid J.F."/>
            <person name="Ring B.Z."/>
            <person name="Ringwald M."/>
            <person name="Rost B."/>
            <person name="Ruan Y."/>
            <person name="Salzberg S.L."/>
            <person name="Sandelin A."/>
            <person name="Schneider C."/>
            <person name="Schoenbach C."/>
            <person name="Sekiguchi K."/>
            <person name="Semple C.A."/>
            <person name="Seno S."/>
            <person name="Sessa L."/>
            <person name="Sheng Y."/>
            <person name="Shibata Y."/>
            <person name="Shimada H."/>
            <person name="Shimada K."/>
            <person name="Silva D."/>
            <person name="Sinclair B."/>
            <person name="Sperling S."/>
            <person name="Stupka E."/>
            <person name="Sugiura K."/>
            <person name="Sultana R."/>
            <person name="Takenaka Y."/>
            <person name="Taki K."/>
            <person name="Tammoja K."/>
            <person name="Tan S.L."/>
            <person name="Tang S."/>
            <person name="Taylor M.S."/>
            <person name="Tegner J."/>
            <person name="Teichmann S.A."/>
            <person name="Ueda H.R."/>
            <person name="van Nimwegen E."/>
            <person name="Verardo R."/>
            <person name="Wei C.L."/>
            <person name="Yagi K."/>
            <person name="Yamanishi H."/>
            <person name="Zabarovsky E."/>
            <person name="Zhu S."/>
            <person name="Zimmer A."/>
            <person name="Hide W."/>
            <person name="Bult C."/>
            <person name="Grimmond S.M."/>
            <person name="Teasdale R.D."/>
            <person name="Liu E.T."/>
            <person name="Brusic V."/>
            <person name="Quackenbush J."/>
            <person name="Wahlestedt C."/>
            <person name="Mattick J.S."/>
            <person name="Hume D.A."/>
            <person name="Kai C."/>
            <person name="Sasaki D."/>
            <person name="Tomaru Y."/>
            <person name="Fukuda S."/>
            <person name="Kanamori-Katayama M."/>
            <person name="Suzuki M."/>
            <person name="Aoki J."/>
            <person name="Arakawa T."/>
            <person name="Iida J."/>
            <person name="Imamura K."/>
            <person name="Itoh M."/>
            <person name="Kato T."/>
            <person name="Kawaji H."/>
            <person name="Kawagashira N."/>
            <person name="Kawashima T."/>
            <person name="Kojima M."/>
            <person name="Kondo S."/>
            <person name="Konno H."/>
            <person name="Nakano K."/>
            <person name="Ninomiya N."/>
            <person name="Nishio T."/>
            <person name="Okada M."/>
            <person name="Plessy C."/>
            <person name="Shibata K."/>
            <person name="Shiraki T."/>
            <person name="Suzuki S."/>
            <person name="Tagami M."/>
            <person name="Waki K."/>
            <person name="Watahiki A."/>
            <person name="Okamura-Oho Y."/>
            <person name="Suzuki H."/>
            <person name="Kawai J."/>
            <person name="Hayashizaki Y."/>
        </authorList>
    </citation>
    <scope>NUCLEOTIDE SEQUENCE [LARGE SCALE MRNA]</scope>
    <source>
        <strain>C57BL/6J</strain>
        <tissue>Spleen</tissue>
    </source>
</reference>
<reference key="5">
    <citation type="submission" date="2005-07" db="EMBL/GenBank/DDBJ databases">
        <authorList>
            <person name="Mural R.J."/>
            <person name="Adams M.D."/>
            <person name="Myers E.W."/>
            <person name="Smith H.O."/>
            <person name="Venter J.C."/>
        </authorList>
    </citation>
    <scope>NUCLEOTIDE SEQUENCE [LARGE SCALE GENOMIC DNA]</scope>
</reference>
<reference key="6">
    <citation type="journal article" date="2004" name="Genome Res.">
        <title>The status, quality, and expansion of the NIH full-length cDNA project: the Mammalian Gene Collection (MGC).</title>
        <authorList>
            <consortium name="The MGC Project Team"/>
        </authorList>
    </citation>
    <scope>NUCLEOTIDE SEQUENCE [LARGE SCALE MRNA]</scope>
</reference>
<reference key="7">
    <citation type="journal article" date="2006" name="Transfus. Clin. Biol.">
        <title>Generation of mice with inactivated Rh or Rhag genes.</title>
        <authorList>
            <person name="Goossens D."/>
            <person name="Bony V."/>
            <person name="Gane P."/>
            <person name="Colin Y."/>
            <person name="Cartron J.P."/>
        </authorList>
    </citation>
    <scope>DISRUPTION PHENOTYPE</scope>
</reference>
<reference key="8">
    <citation type="journal article" date="2010" name="Br. J. Haematol.">
        <title>Generation and characterisation of Rhd and Rhag null mice.</title>
        <authorList>
            <person name="Goossens D."/>
            <person name="Trinh-Trang-Tan M.M."/>
            <person name="Debbia M."/>
            <person name="Ripoche P."/>
            <person name="Vilela-Lamego C."/>
            <person name="Louache F."/>
            <person name="Vainchenker W."/>
            <person name="Colin Y."/>
            <person name="Cartron J.P."/>
        </authorList>
    </citation>
    <scope>FUNCTION</scope>
    <scope>TRANSPORTER ACTIVITY</scope>
    <scope>DISRUPTION PHENOTYPE</scope>
</reference>
<reference key="9">
    <citation type="journal article" date="2010" name="Cell">
        <title>A tissue-specific atlas of mouse protein phosphorylation and expression.</title>
        <authorList>
            <person name="Huttlin E.L."/>
            <person name="Jedrychowski M.P."/>
            <person name="Elias J.E."/>
            <person name="Goswami T."/>
            <person name="Rad R."/>
            <person name="Beausoleil S.A."/>
            <person name="Villen J."/>
            <person name="Haas W."/>
            <person name="Sowa M.E."/>
            <person name="Gygi S.P."/>
        </authorList>
    </citation>
    <scope>IDENTIFICATION BY MASS SPECTROMETRY [LARGE SCALE ANALYSIS]</scope>
    <source>
        <tissue>Spleen</tissue>
    </source>
</reference>
<name>RHAG_MOUSE</name>
<evidence type="ECO:0000250" key="1">
    <source>
        <dbReference type="UniProtKB" id="Q02094"/>
    </source>
</evidence>
<evidence type="ECO:0000255" key="2"/>
<evidence type="ECO:0000269" key="3">
    <source>
    </source>
</evidence>
<evidence type="ECO:0000269" key="4">
    <source>
    </source>
</evidence>
<evidence type="ECO:0000305" key="5"/>
<evidence type="ECO:0000312" key="6">
    <source>
        <dbReference type="MGI" id="MGI:1202713"/>
    </source>
</evidence>
<comment type="function">
    <text evidence="1 4">Component of the ankyrin-1 complex, a multiprotein complex involved in the stability and shape of the erythrocyte membrane. Heterotrimer with RHCE (RHAG)2(RHCE), that transports ammonium and its related derivative methylammonium, in both neutral and ionic forms, across the erythrocyte membrane (PubMed:19807729). The transport of NH4(+) is electrogenic and masks the NH3 transport. Also, may act as a CO2 channel. Moreover in erythrocyte, regulates RHD membrane expression and is associated with rhesus blood group antigen expression (By similarity).</text>
</comment>
<comment type="catalytic activity">
    <reaction evidence="4">
        <text>methylamine(out) = methylamine(in)</text>
        <dbReference type="Rhea" id="RHEA:74391"/>
        <dbReference type="ChEBI" id="CHEBI:59338"/>
    </reaction>
</comment>
<comment type="catalytic activity">
    <reaction evidence="4">
        <text>NH4(+)(in) = NH4(+)(out)</text>
        <dbReference type="Rhea" id="RHEA:28747"/>
        <dbReference type="ChEBI" id="CHEBI:28938"/>
    </reaction>
</comment>
<comment type="catalytic activity">
    <reaction evidence="1">
        <text>CO2(out) = CO2(in)</text>
        <dbReference type="Rhea" id="RHEA:74891"/>
        <dbReference type="ChEBI" id="CHEBI:16526"/>
    </reaction>
</comment>
<comment type="subunit">
    <text evidence="1">Homodimer. Heterotrimer; a RHCE monomer interacts with a RHAG homodimer. Component of the ankyrin-1 complex in the erythrocyte, composed of ANK1, RHCE, RHAG, SLC4A1, EPB42, GYPA, GYPB and AQP1. Interacts with GYPB (via the N-terminal); this interaction bridges the (RHAG)2(RHCE) heterotrimer with the SLC4A1 Band 3 I dimer complexed with GYPA.</text>
</comment>
<comment type="subcellular location">
    <subcellularLocation>
        <location evidence="1">Membrane</location>
        <topology evidence="1">Multi-pass membrane protein</topology>
    </subcellularLocation>
    <text evidence="1">Localization at the plasma membrane is regulated by ANK1.</text>
</comment>
<comment type="PTM">
    <text evidence="1">Glycosylated.</text>
</comment>
<comment type="disruption phenotype">
    <text evidence="3 4">Homozygous knockout mice lacking Rhag exhibit normal growth, development and fertility (PubMed:16581281, PubMed:19807729). Mice exhibit no significant change in body weight and body mass index (PubMed:19807729).</text>
</comment>
<comment type="similarity">
    <text evidence="5">Belongs to the ammonium transporter (TC 2.A.49) family. Rh subfamily.</text>
</comment>
<proteinExistence type="evidence at protein level"/>